<keyword id="KW-0963">Cytoplasm</keyword>
<keyword id="KW-0251">Elongation factor</keyword>
<keyword id="KW-0648">Protein biosynthesis</keyword>
<protein>
    <recommendedName>
        <fullName evidence="1">Elongation factor P</fullName>
        <shortName evidence="1">EF-P</shortName>
    </recommendedName>
</protein>
<dbReference type="EMBL" id="CP000850">
    <property type="protein sequence ID" value="ABV97727.1"/>
    <property type="molecule type" value="Genomic_DNA"/>
</dbReference>
<dbReference type="SMR" id="A8LY10"/>
<dbReference type="STRING" id="391037.Sare_1842"/>
<dbReference type="KEGG" id="saq:Sare_1842"/>
<dbReference type="PATRIC" id="fig|391037.6.peg.1870"/>
<dbReference type="eggNOG" id="COG0231">
    <property type="taxonomic scope" value="Bacteria"/>
</dbReference>
<dbReference type="HOGENOM" id="CLU_074944_0_1_11"/>
<dbReference type="OrthoDB" id="9801844at2"/>
<dbReference type="UniPathway" id="UPA00345"/>
<dbReference type="GO" id="GO:0005737">
    <property type="term" value="C:cytoplasm"/>
    <property type="evidence" value="ECO:0007669"/>
    <property type="project" value="UniProtKB-SubCell"/>
</dbReference>
<dbReference type="GO" id="GO:0003746">
    <property type="term" value="F:translation elongation factor activity"/>
    <property type="evidence" value="ECO:0007669"/>
    <property type="project" value="UniProtKB-UniRule"/>
</dbReference>
<dbReference type="GO" id="GO:0043043">
    <property type="term" value="P:peptide biosynthetic process"/>
    <property type="evidence" value="ECO:0007669"/>
    <property type="project" value="InterPro"/>
</dbReference>
<dbReference type="CDD" id="cd04470">
    <property type="entry name" value="S1_EF-P_repeat_1"/>
    <property type="match status" value="1"/>
</dbReference>
<dbReference type="CDD" id="cd05794">
    <property type="entry name" value="S1_EF-P_repeat_2"/>
    <property type="match status" value="1"/>
</dbReference>
<dbReference type="FunFam" id="2.30.30.30:FF:000003">
    <property type="entry name" value="Elongation factor P"/>
    <property type="match status" value="1"/>
</dbReference>
<dbReference type="FunFam" id="2.40.50.140:FF:000004">
    <property type="entry name" value="Elongation factor P"/>
    <property type="match status" value="1"/>
</dbReference>
<dbReference type="FunFam" id="2.40.50.140:FF:000009">
    <property type="entry name" value="Elongation factor P"/>
    <property type="match status" value="1"/>
</dbReference>
<dbReference type="Gene3D" id="2.30.30.30">
    <property type="match status" value="1"/>
</dbReference>
<dbReference type="Gene3D" id="2.40.50.140">
    <property type="entry name" value="Nucleic acid-binding proteins"/>
    <property type="match status" value="2"/>
</dbReference>
<dbReference type="HAMAP" id="MF_00141">
    <property type="entry name" value="EF_P"/>
    <property type="match status" value="1"/>
</dbReference>
<dbReference type="InterPro" id="IPR015365">
    <property type="entry name" value="Elong-fact-P_C"/>
</dbReference>
<dbReference type="InterPro" id="IPR012340">
    <property type="entry name" value="NA-bd_OB-fold"/>
</dbReference>
<dbReference type="InterPro" id="IPR014722">
    <property type="entry name" value="Rib_uL2_dom2"/>
</dbReference>
<dbReference type="InterPro" id="IPR020599">
    <property type="entry name" value="Transl_elong_fac_P/YeiP"/>
</dbReference>
<dbReference type="InterPro" id="IPR013185">
    <property type="entry name" value="Transl_elong_KOW-like"/>
</dbReference>
<dbReference type="InterPro" id="IPR001059">
    <property type="entry name" value="Transl_elong_P/YeiP_cen"/>
</dbReference>
<dbReference type="InterPro" id="IPR013852">
    <property type="entry name" value="Transl_elong_P/YeiP_CS"/>
</dbReference>
<dbReference type="InterPro" id="IPR011768">
    <property type="entry name" value="Transl_elongation_fac_P"/>
</dbReference>
<dbReference type="InterPro" id="IPR008991">
    <property type="entry name" value="Translation_prot_SH3-like_sf"/>
</dbReference>
<dbReference type="NCBIfam" id="TIGR00038">
    <property type="entry name" value="efp"/>
    <property type="match status" value="1"/>
</dbReference>
<dbReference type="NCBIfam" id="NF001810">
    <property type="entry name" value="PRK00529.1"/>
    <property type="match status" value="1"/>
</dbReference>
<dbReference type="PANTHER" id="PTHR30053">
    <property type="entry name" value="ELONGATION FACTOR P"/>
    <property type="match status" value="1"/>
</dbReference>
<dbReference type="PANTHER" id="PTHR30053:SF12">
    <property type="entry name" value="ELONGATION FACTOR P (EF-P) FAMILY PROTEIN"/>
    <property type="match status" value="1"/>
</dbReference>
<dbReference type="Pfam" id="PF01132">
    <property type="entry name" value="EFP"/>
    <property type="match status" value="1"/>
</dbReference>
<dbReference type="Pfam" id="PF08207">
    <property type="entry name" value="EFP_N"/>
    <property type="match status" value="1"/>
</dbReference>
<dbReference type="Pfam" id="PF09285">
    <property type="entry name" value="Elong-fact-P_C"/>
    <property type="match status" value="1"/>
</dbReference>
<dbReference type="PIRSF" id="PIRSF005901">
    <property type="entry name" value="EF-P"/>
    <property type="match status" value="1"/>
</dbReference>
<dbReference type="SMART" id="SM01185">
    <property type="entry name" value="EFP"/>
    <property type="match status" value="1"/>
</dbReference>
<dbReference type="SMART" id="SM00841">
    <property type="entry name" value="Elong-fact-P_C"/>
    <property type="match status" value="1"/>
</dbReference>
<dbReference type="SUPFAM" id="SSF50249">
    <property type="entry name" value="Nucleic acid-binding proteins"/>
    <property type="match status" value="2"/>
</dbReference>
<dbReference type="SUPFAM" id="SSF50104">
    <property type="entry name" value="Translation proteins SH3-like domain"/>
    <property type="match status" value="1"/>
</dbReference>
<dbReference type="PROSITE" id="PS01275">
    <property type="entry name" value="EFP"/>
    <property type="match status" value="1"/>
</dbReference>
<name>EFP_SALAI</name>
<proteinExistence type="inferred from homology"/>
<organism>
    <name type="scientific">Salinispora arenicola (strain CNS-205)</name>
    <dbReference type="NCBI Taxonomy" id="391037"/>
    <lineage>
        <taxon>Bacteria</taxon>
        <taxon>Bacillati</taxon>
        <taxon>Actinomycetota</taxon>
        <taxon>Actinomycetes</taxon>
        <taxon>Micromonosporales</taxon>
        <taxon>Micromonosporaceae</taxon>
        <taxon>Salinispora</taxon>
    </lineage>
</organism>
<reference key="1">
    <citation type="submission" date="2007-10" db="EMBL/GenBank/DDBJ databases">
        <title>Complete sequence of Salinispora arenicola CNS-205.</title>
        <authorList>
            <consortium name="US DOE Joint Genome Institute"/>
            <person name="Copeland A."/>
            <person name="Lucas S."/>
            <person name="Lapidus A."/>
            <person name="Barry K."/>
            <person name="Glavina del Rio T."/>
            <person name="Dalin E."/>
            <person name="Tice H."/>
            <person name="Pitluck S."/>
            <person name="Foster B."/>
            <person name="Schmutz J."/>
            <person name="Larimer F."/>
            <person name="Land M."/>
            <person name="Hauser L."/>
            <person name="Kyrpides N."/>
            <person name="Ivanova N."/>
            <person name="Jensen P.R."/>
            <person name="Moore B.S."/>
            <person name="Penn K."/>
            <person name="Jenkins C."/>
            <person name="Udwary D."/>
            <person name="Xiang L."/>
            <person name="Gontang E."/>
            <person name="Richardson P."/>
        </authorList>
    </citation>
    <scope>NUCLEOTIDE SEQUENCE [LARGE SCALE GENOMIC DNA]</scope>
    <source>
        <strain>CNS-205</strain>
    </source>
</reference>
<sequence>MATTNDLKNGMVLNLDGELWAVVEFQHVKPGKGGAFVRTTLKNVLSGKVVDKTFNAGTKVDTATVDKRTMQYLYADGEDYVFMDLETFDQITVLGDTVGEAANYLLPEAEAVVATHESVPLYVELPTSVVLEVTYTEPGLQGDRSTGGSKPATVETGATVQVPLFITTGEKIKVDTRDGRYLGRA</sequence>
<evidence type="ECO:0000255" key="1">
    <source>
        <dbReference type="HAMAP-Rule" id="MF_00141"/>
    </source>
</evidence>
<feature type="chain" id="PRO_1000076529" description="Elongation factor P">
    <location>
        <begin position="1"/>
        <end position="185"/>
    </location>
</feature>
<comment type="function">
    <text evidence="1">Involved in peptide bond synthesis. Stimulates efficient translation and peptide-bond synthesis on native or reconstituted 70S ribosomes in vitro. Probably functions indirectly by altering the affinity of the ribosome for aminoacyl-tRNA, thus increasing their reactivity as acceptors for peptidyl transferase.</text>
</comment>
<comment type="pathway">
    <text evidence="1">Protein biosynthesis; polypeptide chain elongation.</text>
</comment>
<comment type="subcellular location">
    <subcellularLocation>
        <location evidence="1">Cytoplasm</location>
    </subcellularLocation>
</comment>
<comment type="similarity">
    <text evidence="1">Belongs to the elongation factor P family.</text>
</comment>
<gene>
    <name evidence="1" type="primary">efp</name>
    <name type="ordered locus">Sare_1842</name>
</gene>
<accession>A8LY10</accession>